<feature type="chain" id="PRO_0000334678" description="Uncharacterized protein C1orf226 homolog">
    <location>
        <begin position="1"/>
        <end position="264"/>
    </location>
</feature>
<feature type="region of interest" description="Disordered" evidence="2">
    <location>
        <begin position="1"/>
        <end position="47"/>
    </location>
</feature>
<feature type="region of interest" description="Disordered" evidence="2">
    <location>
        <begin position="68"/>
        <end position="264"/>
    </location>
</feature>
<feature type="compositionally biased region" description="Polar residues" evidence="2">
    <location>
        <begin position="1"/>
        <end position="18"/>
    </location>
</feature>
<feature type="compositionally biased region" description="Polar residues" evidence="2">
    <location>
        <begin position="73"/>
        <end position="83"/>
    </location>
</feature>
<feature type="compositionally biased region" description="Polar residues" evidence="2">
    <location>
        <begin position="126"/>
        <end position="139"/>
    </location>
</feature>
<feature type="compositionally biased region" description="Low complexity" evidence="2">
    <location>
        <begin position="149"/>
        <end position="171"/>
    </location>
</feature>
<feature type="compositionally biased region" description="Basic and acidic residues" evidence="2">
    <location>
        <begin position="194"/>
        <end position="212"/>
    </location>
</feature>
<feature type="modified residue" description="Phosphoserine" evidence="1">
    <location>
        <position position="214"/>
    </location>
</feature>
<feature type="modified residue" description="Phosphoserine" evidence="1">
    <location>
        <position position="215"/>
    </location>
</feature>
<feature type="modified residue" description="Phosphoserine" evidence="1">
    <location>
        <position position="241"/>
    </location>
</feature>
<feature type="modified residue" description="Phosphoserine" evidence="1">
    <location>
        <position position="250"/>
    </location>
</feature>
<protein>
    <recommendedName>
        <fullName>Uncharacterized protein C1orf226 homolog</fullName>
    </recommendedName>
</protein>
<keyword id="KW-0597">Phosphoprotein</keyword>
<keyword id="KW-1185">Reference proteome</keyword>
<organism>
    <name type="scientific">Bos taurus</name>
    <name type="common">Bovine</name>
    <dbReference type="NCBI Taxonomy" id="9913"/>
    <lineage>
        <taxon>Eukaryota</taxon>
        <taxon>Metazoa</taxon>
        <taxon>Chordata</taxon>
        <taxon>Craniata</taxon>
        <taxon>Vertebrata</taxon>
        <taxon>Euteleostomi</taxon>
        <taxon>Mammalia</taxon>
        <taxon>Eutheria</taxon>
        <taxon>Laurasiatheria</taxon>
        <taxon>Artiodactyla</taxon>
        <taxon>Ruminantia</taxon>
        <taxon>Pecora</taxon>
        <taxon>Bovidae</taxon>
        <taxon>Bovinae</taxon>
        <taxon>Bos</taxon>
    </lineage>
</organism>
<sequence>MFENLNTALTPKLQSSRSFPHLSRPTAPSAAAQGSVEPGGPGLWVGSSQHLKSLGKAVGAKVNDFLRRKEPSSLGSVGTTEVNKTAGAQLAGGADGDDGRSALQEAFPRLDPPPPATRKRTPRALKTTQDMLISSQPVLSSLEYGTELSSGQPQVSSSAQPSPADASQPEATTEVVDRDDALPNGEVSVSVPDLIHKDGQDDPKLKVTECRRASSPGLMERNGLKLSLSPISLAESPEDGSPPPRARTSSVDNEGPHPDLLSFE</sequence>
<evidence type="ECO:0000250" key="1">
    <source>
        <dbReference type="UniProtKB" id="A1L170"/>
    </source>
</evidence>
<evidence type="ECO:0000256" key="2">
    <source>
        <dbReference type="SAM" id="MobiDB-lite"/>
    </source>
</evidence>
<proteinExistence type="evidence at transcript level"/>
<reference key="1">
    <citation type="submission" date="2007-03" db="EMBL/GenBank/DDBJ databases">
        <authorList>
            <consortium name="NIH - Mammalian Gene Collection (MGC) project"/>
        </authorList>
    </citation>
    <scope>NUCLEOTIDE SEQUENCE [LARGE SCALE MRNA]</scope>
    <source>
        <strain>Hereford</strain>
        <tissue>Fetal skin</tissue>
    </source>
</reference>
<name>CA226_BOVIN</name>
<dbReference type="EMBL" id="BC134601">
    <property type="protein sequence ID" value="AAI34602.1"/>
    <property type="molecule type" value="mRNA"/>
</dbReference>
<dbReference type="RefSeq" id="NP_001077259.1">
    <property type="nucleotide sequence ID" value="NM_001083790.2"/>
</dbReference>
<dbReference type="RefSeq" id="XP_005203613.1">
    <property type="nucleotide sequence ID" value="XM_005203556.5"/>
</dbReference>
<dbReference type="STRING" id="9913.ENSBTAP00000059208"/>
<dbReference type="PaxDb" id="9913-ENSBTAP00000045400"/>
<dbReference type="GeneID" id="783439"/>
<dbReference type="KEGG" id="bta:783439"/>
<dbReference type="CTD" id="783439"/>
<dbReference type="VEuPathDB" id="HostDB:ENSBTAG00000050790"/>
<dbReference type="eggNOG" id="KOG4458">
    <property type="taxonomic scope" value="Eukaryota"/>
</dbReference>
<dbReference type="eggNOG" id="KOG4815">
    <property type="taxonomic scope" value="Eukaryota"/>
</dbReference>
<dbReference type="HOGENOM" id="CLU_026008_0_0_1"/>
<dbReference type="InParanoid" id="A4IFJ0"/>
<dbReference type="OMA" id="ENEGPHP"/>
<dbReference type="OrthoDB" id="10030336at2759"/>
<dbReference type="Proteomes" id="UP000009136">
    <property type="component" value="Chromosome 3"/>
</dbReference>
<dbReference type="Bgee" id="ENSBTAG00000050790">
    <property type="expression patterns" value="Expressed in prostate gland and 103 other cell types or tissues"/>
</dbReference>
<dbReference type="InterPro" id="IPR027851">
    <property type="entry name" value="DUF4628"/>
</dbReference>
<dbReference type="Pfam" id="PF15429">
    <property type="entry name" value="DUF4628"/>
    <property type="match status" value="1"/>
</dbReference>
<accession>A4IFJ0</accession>